<proteinExistence type="evidence at protein level"/>
<organism>
    <name type="scientific">Schizosaccharomyces pombe (strain 972 / ATCC 24843)</name>
    <name type="common">Fission yeast</name>
    <dbReference type="NCBI Taxonomy" id="284812"/>
    <lineage>
        <taxon>Eukaryota</taxon>
        <taxon>Fungi</taxon>
        <taxon>Dikarya</taxon>
        <taxon>Ascomycota</taxon>
        <taxon>Taphrinomycotina</taxon>
        <taxon>Schizosaccharomycetes</taxon>
        <taxon>Schizosaccharomycetales</taxon>
        <taxon>Schizosaccharomycetaceae</taxon>
        <taxon>Schizosaccharomyces</taxon>
    </lineage>
</organism>
<gene>
    <name type="primary">cft2</name>
    <name type="ORF">SPBC1709.15c</name>
</gene>
<name>CFT2_SCHPO</name>
<protein>
    <recommendedName>
        <fullName>Cleavage factor two protein 2</fullName>
    </recommendedName>
</protein>
<accession>O74740</accession>
<evidence type="ECO:0000250" key="1"/>
<evidence type="ECO:0000256" key="2">
    <source>
        <dbReference type="SAM" id="MobiDB-lite"/>
    </source>
</evidence>
<evidence type="ECO:0000269" key="3">
    <source>
    </source>
</evidence>
<evidence type="ECO:0000269" key="4">
    <source>
    </source>
</evidence>
<comment type="function">
    <text evidence="1">RNA-binding component of the cleavage and polyadenylation factor (CPF) complex, which plays a key role in polyadenylation-dependent pre-mRNA 3'-end formation and cooperates with cleavage factors including the CFIA complex and NAB4/CFIB. May be involved in poly(A)-site recognition. May be involved in the association of the CPF, CPFIA and RNA polymerase II complexes (By similarity).</text>
</comment>
<comment type="subunit">
    <text evidence="3">Component of the cleavage and polyadenylation factor (CPF) complex, which is composed of cft1, cft2, ysh1, pta1, swd2, pfs2, dis2, yth1, ssu72, and fip1.</text>
</comment>
<comment type="subcellular location">
    <subcellularLocation>
        <location evidence="4">Nucleus</location>
    </subcellularLocation>
</comment>
<sequence length="797" mass="89451">MLNYQCLETDSYCGTSHIELDGIHIYIDPGSDDSLKHPEVPEQPDLILLSHSDLAHIGGLVYAYYKYDWKNAYIYATLPTINMGRMTMLDAIKSNYISDMSKADVDAVFDSIIPLRYQQPTLLLGKCSGLTITAYNAGHTLGGTLWSLIKESESVLYAVDWNHSKDKHLNGAALYSNGHILEALNRPNTLITDANNSLVSIPSRKKRDEAFIESVMSSLLKGGTVLLPVDAASRVLELCCILDNHWSASQPPLPFPILFLSPTSTKTIDYAKSMIEWMGDNIVRDFGINENLLEFRNINTITDFSQISHIGPGPKVILATALTLECGFSQRILLDLMSENSNDLILFTQRSRCPQNSLANQFIRYWERASKKKRDIPHPVGLYAEQAVKIKTKEPLEGEELRSYQELEFSKRNKDAEDTALEFRNRTILDEDLSSSSSSEDDDLDLNTEVPHVALGSSAFLMGKSFDLNLRDPAVQALHTKYKMFPYIEKRRRIDEYGEIIKHQDFSMINEPANTLELENDSDDNALSNSNGKRKWSEINDGLQQKKEEEDEDEVPSKIITDEKTIRVSCQVQFIDIEGLHDGRSLKTIIPQVNPRRLVLIHASTEEKEDMKKTCASLSAFTKDVYIPNYGEIINVSIDVNAFSLKLADDLIKNLIWTKVGNCEVSHMLAKVEISKPSEEEDKKEEVEKKDGDKERNEEKKEEKETLPVLNALTLRSDLARAPRAAPLLVGNIRLAYLRKALLDQGISAELKGEGVLLCGGAVAVRKLSGGKISVEGSLSNRFFEIRKLVYDALAVV</sequence>
<reference key="1">
    <citation type="journal article" date="2002" name="Nature">
        <title>The genome sequence of Schizosaccharomyces pombe.</title>
        <authorList>
            <person name="Wood V."/>
            <person name="Gwilliam R."/>
            <person name="Rajandream M.A."/>
            <person name="Lyne M.H."/>
            <person name="Lyne R."/>
            <person name="Stewart A."/>
            <person name="Sgouros J.G."/>
            <person name="Peat N."/>
            <person name="Hayles J."/>
            <person name="Baker S.G."/>
            <person name="Basham D."/>
            <person name="Bowman S."/>
            <person name="Brooks K."/>
            <person name="Brown D."/>
            <person name="Brown S."/>
            <person name="Chillingworth T."/>
            <person name="Churcher C.M."/>
            <person name="Collins M."/>
            <person name="Connor R."/>
            <person name="Cronin A."/>
            <person name="Davis P."/>
            <person name="Feltwell T."/>
            <person name="Fraser A."/>
            <person name="Gentles S."/>
            <person name="Goble A."/>
            <person name="Hamlin N."/>
            <person name="Harris D.E."/>
            <person name="Hidalgo J."/>
            <person name="Hodgson G."/>
            <person name="Holroyd S."/>
            <person name="Hornsby T."/>
            <person name="Howarth S."/>
            <person name="Huckle E.J."/>
            <person name="Hunt S."/>
            <person name="Jagels K."/>
            <person name="James K.D."/>
            <person name="Jones L."/>
            <person name="Jones M."/>
            <person name="Leather S."/>
            <person name="McDonald S."/>
            <person name="McLean J."/>
            <person name="Mooney P."/>
            <person name="Moule S."/>
            <person name="Mungall K.L."/>
            <person name="Murphy L.D."/>
            <person name="Niblett D."/>
            <person name="Odell C."/>
            <person name="Oliver K."/>
            <person name="O'Neil S."/>
            <person name="Pearson D."/>
            <person name="Quail M.A."/>
            <person name="Rabbinowitsch E."/>
            <person name="Rutherford K.M."/>
            <person name="Rutter S."/>
            <person name="Saunders D."/>
            <person name="Seeger K."/>
            <person name="Sharp S."/>
            <person name="Skelton J."/>
            <person name="Simmonds M.N."/>
            <person name="Squares R."/>
            <person name="Squares S."/>
            <person name="Stevens K."/>
            <person name="Taylor K."/>
            <person name="Taylor R.G."/>
            <person name="Tivey A."/>
            <person name="Walsh S.V."/>
            <person name="Warren T."/>
            <person name="Whitehead S."/>
            <person name="Woodward J.R."/>
            <person name="Volckaert G."/>
            <person name="Aert R."/>
            <person name="Robben J."/>
            <person name="Grymonprez B."/>
            <person name="Weltjens I."/>
            <person name="Vanstreels E."/>
            <person name="Rieger M."/>
            <person name="Schaefer M."/>
            <person name="Mueller-Auer S."/>
            <person name="Gabel C."/>
            <person name="Fuchs M."/>
            <person name="Duesterhoeft A."/>
            <person name="Fritzc C."/>
            <person name="Holzer E."/>
            <person name="Moestl D."/>
            <person name="Hilbert H."/>
            <person name="Borzym K."/>
            <person name="Langer I."/>
            <person name="Beck A."/>
            <person name="Lehrach H."/>
            <person name="Reinhardt R."/>
            <person name="Pohl T.M."/>
            <person name="Eger P."/>
            <person name="Zimmermann W."/>
            <person name="Wedler H."/>
            <person name="Wambutt R."/>
            <person name="Purnelle B."/>
            <person name="Goffeau A."/>
            <person name="Cadieu E."/>
            <person name="Dreano S."/>
            <person name="Gloux S."/>
            <person name="Lelaure V."/>
            <person name="Mottier S."/>
            <person name="Galibert F."/>
            <person name="Aves S.J."/>
            <person name="Xiang Z."/>
            <person name="Hunt C."/>
            <person name="Moore K."/>
            <person name="Hurst S.M."/>
            <person name="Lucas M."/>
            <person name="Rochet M."/>
            <person name="Gaillardin C."/>
            <person name="Tallada V.A."/>
            <person name="Garzon A."/>
            <person name="Thode G."/>
            <person name="Daga R.R."/>
            <person name="Cruzado L."/>
            <person name="Jimenez J."/>
            <person name="Sanchez M."/>
            <person name="del Rey F."/>
            <person name="Benito J."/>
            <person name="Dominguez A."/>
            <person name="Revuelta J.L."/>
            <person name="Moreno S."/>
            <person name="Armstrong J."/>
            <person name="Forsburg S.L."/>
            <person name="Cerutti L."/>
            <person name="Lowe T."/>
            <person name="McCombie W.R."/>
            <person name="Paulsen I."/>
            <person name="Potashkin J."/>
            <person name="Shpakovski G.V."/>
            <person name="Ussery D."/>
            <person name="Barrell B.G."/>
            <person name="Nurse P."/>
        </authorList>
    </citation>
    <scope>NUCLEOTIDE SEQUENCE [LARGE SCALE GENOMIC DNA]</scope>
    <source>
        <strain>972 / ATCC 24843</strain>
    </source>
</reference>
<reference key="2">
    <citation type="journal article" date="2004" name="Mol. Cell. Proteomics">
        <title>A comparative analysis of an orthologous proteomic environment in the yeasts Saccharomyces cerevisiae and Schizosaccharomyces pombe.</title>
        <authorList>
            <person name="Roguev A."/>
            <person name="Shevchenko A."/>
            <person name="Schaft D."/>
            <person name="Thomas H."/>
            <person name="Stewart A.F."/>
            <person name="Shevchenko A."/>
        </authorList>
    </citation>
    <scope>IDENTIFICATION IN THE CPF COMPLEX</scope>
</reference>
<reference key="3">
    <citation type="journal article" date="2006" name="Nat. Biotechnol.">
        <title>ORFeome cloning and global analysis of protein localization in the fission yeast Schizosaccharomyces pombe.</title>
        <authorList>
            <person name="Matsuyama A."/>
            <person name="Arai R."/>
            <person name="Yashiroda Y."/>
            <person name="Shirai A."/>
            <person name="Kamata A."/>
            <person name="Sekido S."/>
            <person name="Kobayashi Y."/>
            <person name="Hashimoto A."/>
            <person name="Hamamoto M."/>
            <person name="Hiraoka Y."/>
            <person name="Horinouchi S."/>
            <person name="Yoshida M."/>
        </authorList>
    </citation>
    <scope>SUBCELLULAR LOCATION [LARGE SCALE ANALYSIS]</scope>
</reference>
<keyword id="KW-0507">mRNA processing</keyword>
<keyword id="KW-0539">Nucleus</keyword>
<keyword id="KW-1185">Reference proteome</keyword>
<dbReference type="EMBL" id="CU329671">
    <property type="protein sequence ID" value="CAA21254.1"/>
    <property type="molecule type" value="Genomic_DNA"/>
</dbReference>
<dbReference type="PIR" id="T39643">
    <property type="entry name" value="T39643"/>
</dbReference>
<dbReference type="RefSeq" id="NP_595448.1">
    <property type="nucleotide sequence ID" value="NM_001021357.2"/>
</dbReference>
<dbReference type="SMR" id="O74740"/>
<dbReference type="BioGRID" id="276498">
    <property type="interactions" value="8"/>
</dbReference>
<dbReference type="FunCoup" id="O74740">
    <property type="interactions" value="957"/>
</dbReference>
<dbReference type="STRING" id="284812.O74740"/>
<dbReference type="iPTMnet" id="O74740"/>
<dbReference type="PaxDb" id="4896-SPBC1709.15c.1"/>
<dbReference type="EnsemblFungi" id="SPBC1709.15c.1">
    <property type="protein sequence ID" value="SPBC1709.15c.1:pep"/>
    <property type="gene ID" value="SPBC1709.15c"/>
</dbReference>
<dbReference type="GeneID" id="2539954"/>
<dbReference type="KEGG" id="spo:2539954"/>
<dbReference type="PomBase" id="SPBC1709.15c">
    <property type="gene designation" value="cft2"/>
</dbReference>
<dbReference type="VEuPathDB" id="FungiDB:SPBC1709.15c"/>
<dbReference type="eggNOG" id="KOG1135">
    <property type="taxonomic scope" value="Eukaryota"/>
</dbReference>
<dbReference type="HOGENOM" id="CLU_002227_3_0_1"/>
<dbReference type="InParanoid" id="O74740"/>
<dbReference type="OMA" id="QSRHNME"/>
<dbReference type="PhylomeDB" id="O74740"/>
<dbReference type="Reactome" id="R-SPO-159231">
    <property type="pathway name" value="Transport of Mature mRNA Derived from an Intronless Transcript"/>
</dbReference>
<dbReference type="Reactome" id="R-SPO-77595">
    <property type="pathway name" value="Processing of Intronless Pre-mRNAs"/>
</dbReference>
<dbReference type="PRO" id="PR:O74740"/>
<dbReference type="Proteomes" id="UP000002485">
    <property type="component" value="Chromosome II"/>
</dbReference>
<dbReference type="GO" id="GO:0005847">
    <property type="term" value="C:mRNA cleavage and polyadenylation specificity factor complex"/>
    <property type="evidence" value="ECO:0000314"/>
    <property type="project" value="PomBase"/>
</dbReference>
<dbReference type="GO" id="GO:0005634">
    <property type="term" value="C:nucleus"/>
    <property type="evidence" value="ECO:0007005"/>
    <property type="project" value="PomBase"/>
</dbReference>
<dbReference type="GO" id="GO:0003723">
    <property type="term" value="F:RNA binding"/>
    <property type="evidence" value="ECO:0000318"/>
    <property type="project" value="GO_Central"/>
</dbReference>
<dbReference type="GO" id="GO:0180010">
    <property type="term" value="P:co-transcriptional mRNA 3'-end processing, cleavage and polyadenylation pathway"/>
    <property type="evidence" value="ECO:0000305"/>
    <property type="project" value="PomBase"/>
</dbReference>
<dbReference type="CDD" id="cd16293">
    <property type="entry name" value="CPSF2-like_MBL-fold"/>
    <property type="match status" value="1"/>
</dbReference>
<dbReference type="Gene3D" id="3.60.15.10">
    <property type="entry name" value="Ribonuclease Z/Hydroxyacylglutathione hydrolase-like"/>
    <property type="match status" value="1"/>
</dbReference>
<dbReference type="InterPro" id="IPR022712">
    <property type="entry name" value="Beta_Casp"/>
</dbReference>
<dbReference type="InterPro" id="IPR027075">
    <property type="entry name" value="CPSF2"/>
</dbReference>
<dbReference type="InterPro" id="IPR025069">
    <property type="entry name" value="Cpsf2_C"/>
</dbReference>
<dbReference type="InterPro" id="IPR035639">
    <property type="entry name" value="CPSF2_MBL"/>
</dbReference>
<dbReference type="InterPro" id="IPR001279">
    <property type="entry name" value="Metallo-B-lactamas"/>
</dbReference>
<dbReference type="InterPro" id="IPR036866">
    <property type="entry name" value="RibonucZ/Hydroxyglut_hydro"/>
</dbReference>
<dbReference type="InterPro" id="IPR011108">
    <property type="entry name" value="RMMBL"/>
</dbReference>
<dbReference type="PANTHER" id="PTHR45922">
    <property type="entry name" value="CLEAVAGE AND POLYADENYLATION SPECIFICITY FACTOR SUBUNIT 2"/>
    <property type="match status" value="1"/>
</dbReference>
<dbReference type="PANTHER" id="PTHR45922:SF1">
    <property type="entry name" value="CLEAVAGE AND POLYADENYLATION SPECIFICITY FACTOR SUBUNIT 2"/>
    <property type="match status" value="1"/>
</dbReference>
<dbReference type="Pfam" id="PF10996">
    <property type="entry name" value="Beta-Casp"/>
    <property type="match status" value="1"/>
</dbReference>
<dbReference type="Pfam" id="PF13299">
    <property type="entry name" value="CPSF100_C"/>
    <property type="match status" value="1"/>
</dbReference>
<dbReference type="Pfam" id="PF16661">
    <property type="entry name" value="Lactamase_B_6"/>
    <property type="match status" value="1"/>
</dbReference>
<dbReference type="Pfam" id="PF07521">
    <property type="entry name" value="RMMBL"/>
    <property type="match status" value="1"/>
</dbReference>
<dbReference type="SMART" id="SM01027">
    <property type="entry name" value="Beta-Casp"/>
    <property type="match status" value="1"/>
</dbReference>
<dbReference type="SUPFAM" id="SSF56281">
    <property type="entry name" value="Metallo-hydrolase/oxidoreductase"/>
    <property type="match status" value="1"/>
</dbReference>
<feature type="chain" id="PRO_0000339461" description="Cleavage factor two protein 2">
    <location>
        <begin position="1"/>
        <end position="797"/>
    </location>
</feature>
<feature type="region of interest" description="Disordered" evidence="2">
    <location>
        <begin position="519"/>
        <end position="557"/>
    </location>
</feature>
<feature type="region of interest" description="Disordered" evidence="2">
    <location>
        <begin position="677"/>
        <end position="703"/>
    </location>
</feature>
<feature type="compositionally biased region" description="Basic and acidic residues" evidence="2">
    <location>
        <begin position="684"/>
        <end position="703"/>
    </location>
</feature>